<comment type="function">
    <text evidence="1">Catalyzes the methylthiolation of N6-(dimethylallyl)adenosine (i(6)A), leading to the formation of 2-methylthio-N6-(dimethylallyl)adenosine (ms(2)i(6)A) at position 37 in tRNAs that read codons beginning with uridine.</text>
</comment>
<comment type="catalytic activity">
    <reaction evidence="1">
        <text>N(6)-dimethylallyladenosine(37) in tRNA + (sulfur carrier)-SH + AH2 + 2 S-adenosyl-L-methionine = 2-methylsulfanyl-N(6)-dimethylallyladenosine(37) in tRNA + (sulfur carrier)-H + 5'-deoxyadenosine + L-methionine + A + S-adenosyl-L-homocysteine + 2 H(+)</text>
        <dbReference type="Rhea" id="RHEA:37067"/>
        <dbReference type="Rhea" id="RHEA-COMP:10375"/>
        <dbReference type="Rhea" id="RHEA-COMP:10376"/>
        <dbReference type="Rhea" id="RHEA-COMP:14737"/>
        <dbReference type="Rhea" id="RHEA-COMP:14739"/>
        <dbReference type="ChEBI" id="CHEBI:13193"/>
        <dbReference type="ChEBI" id="CHEBI:15378"/>
        <dbReference type="ChEBI" id="CHEBI:17319"/>
        <dbReference type="ChEBI" id="CHEBI:17499"/>
        <dbReference type="ChEBI" id="CHEBI:29917"/>
        <dbReference type="ChEBI" id="CHEBI:57844"/>
        <dbReference type="ChEBI" id="CHEBI:57856"/>
        <dbReference type="ChEBI" id="CHEBI:59789"/>
        <dbReference type="ChEBI" id="CHEBI:64428"/>
        <dbReference type="ChEBI" id="CHEBI:74415"/>
        <dbReference type="ChEBI" id="CHEBI:74417"/>
        <dbReference type="EC" id="2.8.4.3"/>
    </reaction>
</comment>
<comment type="cofactor">
    <cofactor evidence="1">
        <name>[4Fe-4S] cluster</name>
        <dbReference type="ChEBI" id="CHEBI:49883"/>
    </cofactor>
    <text evidence="1">Binds 2 [4Fe-4S] clusters. One cluster is coordinated with 3 cysteines and an exchangeable S-adenosyl-L-methionine.</text>
</comment>
<comment type="subunit">
    <text evidence="1">Monomer.</text>
</comment>
<comment type="subcellular location">
    <subcellularLocation>
        <location evidence="1">Cytoplasm</location>
    </subcellularLocation>
</comment>
<comment type="similarity">
    <text evidence="1">Belongs to the methylthiotransferase family. MiaB subfamily.</text>
</comment>
<keyword id="KW-0004">4Fe-4S</keyword>
<keyword id="KW-0963">Cytoplasm</keyword>
<keyword id="KW-0408">Iron</keyword>
<keyword id="KW-0411">Iron-sulfur</keyword>
<keyword id="KW-0479">Metal-binding</keyword>
<keyword id="KW-1185">Reference proteome</keyword>
<keyword id="KW-0949">S-adenosyl-L-methionine</keyword>
<keyword id="KW-0808">Transferase</keyword>
<keyword id="KW-0819">tRNA processing</keyword>
<reference key="1">
    <citation type="submission" date="2006-01" db="EMBL/GenBank/DDBJ databases">
        <title>Complete sequence of Novosphingobium aromaticivorans DSM 12444.</title>
        <authorList>
            <consortium name="US DOE Joint Genome Institute"/>
            <person name="Copeland A."/>
            <person name="Lucas S."/>
            <person name="Lapidus A."/>
            <person name="Barry K."/>
            <person name="Detter J.C."/>
            <person name="Glavina T."/>
            <person name="Hammon N."/>
            <person name="Israni S."/>
            <person name="Pitluck S."/>
            <person name="Chain P."/>
            <person name="Malfatti S."/>
            <person name="Shin M."/>
            <person name="Vergez L."/>
            <person name="Schmutz J."/>
            <person name="Larimer F."/>
            <person name="Land M."/>
            <person name="Kyrpides N."/>
            <person name="Ivanova N."/>
            <person name="Fredrickson J."/>
            <person name="Balkwill D."/>
            <person name="Romine M.F."/>
            <person name="Richardson P."/>
        </authorList>
    </citation>
    <scope>NUCLEOTIDE SEQUENCE [LARGE SCALE GENOMIC DNA]</scope>
    <source>
        <strain>ATCC 700278 / DSM 12444 / CCUG 56034 / CIP 105152 / NBRC 16084 / F199</strain>
    </source>
</reference>
<dbReference type="EC" id="2.8.4.3" evidence="1"/>
<dbReference type="EMBL" id="CP000248">
    <property type="protein sequence ID" value="ABD25427.1"/>
    <property type="molecule type" value="Genomic_DNA"/>
</dbReference>
<dbReference type="RefSeq" id="WP_011444641.1">
    <property type="nucleotide sequence ID" value="NC_007794.1"/>
</dbReference>
<dbReference type="SMR" id="Q2G9P6"/>
<dbReference type="STRING" id="279238.Saro_0982"/>
<dbReference type="KEGG" id="nar:Saro_0982"/>
<dbReference type="eggNOG" id="COG0621">
    <property type="taxonomic scope" value="Bacteria"/>
</dbReference>
<dbReference type="HOGENOM" id="CLU_018697_2_0_5"/>
<dbReference type="Proteomes" id="UP000009134">
    <property type="component" value="Chromosome"/>
</dbReference>
<dbReference type="GO" id="GO:0005829">
    <property type="term" value="C:cytosol"/>
    <property type="evidence" value="ECO:0007669"/>
    <property type="project" value="TreeGrafter"/>
</dbReference>
<dbReference type="GO" id="GO:0051539">
    <property type="term" value="F:4 iron, 4 sulfur cluster binding"/>
    <property type="evidence" value="ECO:0007669"/>
    <property type="project" value="UniProtKB-UniRule"/>
</dbReference>
<dbReference type="GO" id="GO:0046872">
    <property type="term" value="F:metal ion binding"/>
    <property type="evidence" value="ECO:0007669"/>
    <property type="project" value="UniProtKB-KW"/>
</dbReference>
<dbReference type="GO" id="GO:0035597">
    <property type="term" value="F:N6-isopentenyladenosine methylthiotransferase activity"/>
    <property type="evidence" value="ECO:0007669"/>
    <property type="project" value="TreeGrafter"/>
</dbReference>
<dbReference type="CDD" id="cd01335">
    <property type="entry name" value="Radical_SAM"/>
    <property type="match status" value="1"/>
</dbReference>
<dbReference type="FunFam" id="3.40.50.12160:FF:000003">
    <property type="entry name" value="CDK5 regulatory subunit-associated protein 1"/>
    <property type="match status" value="1"/>
</dbReference>
<dbReference type="FunFam" id="3.80.30.20:FF:000001">
    <property type="entry name" value="tRNA-2-methylthio-N(6)-dimethylallyladenosine synthase 2"/>
    <property type="match status" value="1"/>
</dbReference>
<dbReference type="Gene3D" id="3.40.50.12160">
    <property type="entry name" value="Methylthiotransferase, N-terminal domain"/>
    <property type="match status" value="1"/>
</dbReference>
<dbReference type="Gene3D" id="3.80.30.20">
    <property type="entry name" value="tm_1862 like domain"/>
    <property type="match status" value="1"/>
</dbReference>
<dbReference type="HAMAP" id="MF_01864">
    <property type="entry name" value="tRNA_metthiotr_MiaB"/>
    <property type="match status" value="1"/>
</dbReference>
<dbReference type="InterPro" id="IPR006638">
    <property type="entry name" value="Elp3/MiaA/NifB-like_rSAM"/>
</dbReference>
<dbReference type="InterPro" id="IPR005839">
    <property type="entry name" value="Methylthiotransferase"/>
</dbReference>
<dbReference type="InterPro" id="IPR020612">
    <property type="entry name" value="Methylthiotransferase_CS"/>
</dbReference>
<dbReference type="InterPro" id="IPR013848">
    <property type="entry name" value="Methylthiotransferase_N"/>
</dbReference>
<dbReference type="InterPro" id="IPR038135">
    <property type="entry name" value="Methylthiotransferase_N_sf"/>
</dbReference>
<dbReference type="InterPro" id="IPR006463">
    <property type="entry name" value="MiaB_methiolase"/>
</dbReference>
<dbReference type="InterPro" id="IPR007197">
    <property type="entry name" value="rSAM"/>
</dbReference>
<dbReference type="InterPro" id="IPR023404">
    <property type="entry name" value="rSAM_horseshoe"/>
</dbReference>
<dbReference type="InterPro" id="IPR002792">
    <property type="entry name" value="TRAM_dom"/>
</dbReference>
<dbReference type="NCBIfam" id="TIGR01574">
    <property type="entry name" value="miaB-methiolase"/>
    <property type="match status" value="1"/>
</dbReference>
<dbReference type="NCBIfam" id="TIGR00089">
    <property type="entry name" value="MiaB/RimO family radical SAM methylthiotransferase"/>
    <property type="match status" value="1"/>
</dbReference>
<dbReference type="PANTHER" id="PTHR43020">
    <property type="entry name" value="CDK5 REGULATORY SUBUNIT-ASSOCIATED PROTEIN 1"/>
    <property type="match status" value="1"/>
</dbReference>
<dbReference type="PANTHER" id="PTHR43020:SF2">
    <property type="entry name" value="MITOCHONDRIAL TRNA METHYLTHIOTRANSFERASE CDK5RAP1"/>
    <property type="match status" value="1"/>
</dbReference>
<dbReference type="Pfam" id="PF04055">
    <property type="entry name" value="Radical_SAM"/>
    <property type="match status" value="1"/>
</dbReference>
<dbReference type="Pfam" id="PF01938">
    <property type="entry name" value="TRAM"/>
    <property type="match status" value="1"/>
</dbReference>
<dbReference type="Pfam" id="PF00919">
    <property type="entry name" value="UPF0004"/>
    <property type="match status" value="1"/>
</dbReference>
<dbReference type="SFLD" id="SFLDF00273">
    <property type="entry name" value="(dimethylallyl)adenosine_tRNA"/>
    <property type="match status" value="1"/>
</dbReference>
<dbReference type="SFLD" id="SFLDG01082">
    <property type="entry name" value="B12-binding_domain_containing"/>
    <property type="match status" value="1"/>
</dbReference>
<dbReference type="SFLD" id="SFLDG01061">
    <property type="entry name" value="methylthiotransferase"/>
    <property type="match status" value="1"/>
</dbReference>
<dbReference type="SMART" id="SM00729">
    <property type="entry name" value="Elp3"/>
    <property type="match status" value="1"/>
</dbReference>
<dbReference type="SUPFAM" id="SSF102114">
    <property type="entry name" value="Radical SAM enzymes"/>
    <property type="match status" value="1"/>
</dbReference>
<dbReference type="PROSITE" id="PS51449">
    <property type="entry name" value="MTTASE_N"/>
    <property type="match status" value="1"/>
</dbReference>
<dbReference type="PROSITE" id="PS01278">
    <property type="entry name" value="MTTASE_RADICAL"/>
    <property type="match status" value="1"/>
</dbReference>
<dbReference type="PROSITE" id="PS51918">
    <property type="entry name" value="RADICAL_SAM"/>
    <property type="match status" value="1"/>
</dbReference>
<dbReference type="PROSITE" id="PS50926">
    <property type="entry name" value="TRAM"/>
    <property type="match status" value="1"/>
</dbReference>
<protein>
    <recommendedName>
        <fullName evidence="1">tRNA-2-methylthio-N(6)-dimethylallyladenosine synthase</fullName>
        <ecNumber evidence="1">2.8.4.3</ecNumber>
    </recommendedName>
    <alternativeName>
        <fullName evidence="1">(Dimethylallyl)adenosine tRNA methylthiotransferase MiaB</fullName>
    </alternativeName>
    <alternativeName>
        <fullName evidence="1">tRNA-i(6)A37 methylthiotransferase</fullName>
    </alternativeName>
</protein>
<sequence length="443" mass="47685">MSSSAPSSASPKTFRVKSFGCQMNVYDGERMAELLAAQGMSAAGDGDDADLVVLNTCHIREKATEKVYSDIGRLRRADGSAPLIAVAGCVAQAEGEEIMARAPSVKVVVGPQSYHRLPEMVADAAAGKRSTETDMPAEAKFAALPKRRKSAPTAFLTVQEGCDKFCTYCVVPYTRGAEISRPFSDLVEEAKLLVAGGAREITLLGQNVNAWAGEDDKGRPIGLDGLARALAAEPDLKRIRYTTSHPNDMTDGLIAAHGELEKLMPFLHLPVQAGNDRVLKAMNRSHTADSYMALLERIRAARPDIALSGDFIVGFPGETDAEFEDTLRLVDAVGYAQAFSFKYSARPGTPAATMENHVPVAVMDERLQRLQAALNRDQLAFNKASVGKTCEVLVERRGKHPGQWLGKSPWLQSVHFSGEAEIGDMVTVELIEAGPNSISGRLA</sequence>
<proteinExistence type="inferred from homology"/>
<name>MIAB_NOVAD</name>
<gene>
    <name evidence="1" type="primary">miaB</name>
    <name type="ordered locus">Saro_0982</name>
</gene>
<organism>
    <name type="scientific">Novosphingobium aromaticivorans (strain ATCC 700278 / DSM 12444 / CCUG 56034 / CIP 105152 / NBRC 16084 / F199)</name>
    <dbReference type="NCBI Taxonomy" id="279238"/>
    <lineage>
        <taxon>Bacteria</taxon>
        <taxon>Pseudomonadati</taxon>
        <taxon>Pseudomonadota</taxon>
        <taxon>Alphaproteobacteria</taxon>
        <taxon>Sphingomonadales</taxon>
        <taxon>Sphingomonadaceae</taxon>
        <taxon>Novosphingobium</taxon>
    </lineage>
</organism>
<accession>Q2G9P6</accession>
<evidence type="ECO:0000255" key="1">
    <source>
        <dbReference type="HAMAP-Rule" id="MF_01864"/>
    </source>
</evidence>
<evidence type="ECO:0000255" key="2">
    <source>
        <dbReference type="PROSITE-ProRule" id="PRU01266"/>
    </source>
</evidence>
<feature type="chain" id="PRO_0000374417" description="tRNA-2-methylthio-N(6)-dimethylallyladenosine synthase">
    <location>
        <begin position="1"/>
        <end position="443"/>
    </location>
</feature>
<feature type="domain" description="MTTase N-terminal" evidence="1">
    <location>
        <begin position="12"/>
        <end position="126"/>
    </location>
</feature>
<feature type="domain" description="Radical SAM core" evidence="2">
    <location>
        <begin position="148"/>
        <end position="380"/>
    </location>
</feature>
<feature type="domain" description="TRAM" evidence="1">
    <location>
        <begin position="383"/>
        <end position="443"/>
    </location>
</feature>
<feature type="binding site" evidence="1">
    <location>
        <position position="21"/>
    </location>
    <ligand>
        <name>[4Fe-4S] cluster</name>
        <dbReference type="ChEBI" id="CHEBI:49883"/>
        <label>1</label>
    </ligand>
</feature>
<feature type="binding site" evidence="1">
    <location>
        <position position="57"/>
    </location>
    <ligand>
        <name>[4Fe-4S] cluster</name>
        <dbReference type="ChEBI" id="CHEBI:49883"/>
        <label>1</label>
    </ligand>
</feature>
<feature type="binding site" evidence="1">
    <location>
        <position position="89"/>
    </location>
    <ligand>
        <name>[4Fe-4S] cluster</name>
        <dbReference type="ChEBI" id="CHEBI:49883"/>
        <label>1</label>
    </ligand>
</feature>
<feature type="binding site" evidence="1">
    <location>
        <position position="162"/>
    </location>
    <ligand>
        <name>[4Fe-4S] cluster</name>
        <dbReference type="ChEBI" id="CHEBI:49883"/>
        <label>2</label>
        <note>4Fe-4S-S-AdoMet</note>
    </ligand>
</feature>
<feature type="binding site" evidence="1">
    <location>
        <position position="166"/>
    </location>
    <ligand>
        <name>[4Fe-4S] cluster</name>
        <dbReference type="ChEBI" id="CHEBI:49883"/>
        <label>2</label>
        <note>4Fe-4S-S-AdoMet</note>
    </ligand>
</feature>
<feature type="binding site" evidence="1">
    <location>
        <position position="169"/>
    </location>
    <ligand>
        <name>[4Fe-4S] cluster</name>
        <dbReference type="ChEBI" id="CHEBI:49883"/>
        <label>2</label>
        <note>4Fe-4S-S-AdoMet</note>
    </ligand>
</feature>